<dbReference type="EC" id="2.7.7.6" evidence="1"/>
<dbReference type="EMBL" id="AM849034">
    <property type="protein sequence ID" value="CAQ02122.1"/>
    <property type="molecule type" value="Genomic_DNA"/>
</dbReference>
<dbReference type="RefSeq" id="WP_012038467.1">
    <property type="nucleotide sequence ID" value="NZ_MZMN01000003.1"/>
</dbReference>
<dbReference type="SMR" id="B0REV6"/>
<dbReference type="STRING" id="31964.CMS2026"/>
<dbReference type="GeneID" id="92947766"/>
<dbReference type="KEGG" id="cms:CMS2026"/>
<dbReference type="eggNOG" id="COG1758">
    <property type="taxonomic scope" value="Bacteria"/>
</dbReference>
<dbReference type="HOGENOM" id="CLU_125406_1_1_11"/>
<dbReference type="OrthoDB" id="8481372at2"/>
<dbReference type="Proteomes" id="UP000001318">
    <property type="component" value="Chromosome"/>
</dbReference>
<dbReference type="GO" id="GO:0000428">
    <property type="term" value="C:DNA-directed RNA polymerase complex"/>
    <property type="evidence" value="ECO:0007669"/>
    <property type="project" value="UniProtKB-KW"/>
</dbReference>
<dbReference type="GO" id="GO:0003677">
    <property type="term" value="F:DNA binding"/>
    <property type="evidence" value="ECO:0007669"/>
    <property type="project" value="UniProtKB-UniRule"/>
</dbReference>
<dbReference type="GO" id="GO:0003899">
    <property type="term" value="F:DNA-directed RNA polymerase activity"/>
    <property type="evidence" value="ECO:0007669"/>
    <property type="project" value="UniProtKB-UniRule"/>
</dbReference>
<dbReference type="GO" id="GO:0006351">
    <property type="term" value="P:DNA-templated transcription"/>
    <property type="evidence" value="ECO:0007669"/>
    <property type="project" value="UniProtKB-UniRule"/>
</dbReference>
<dbReference type="Gene3D" id="3.90.940.10">
    <property type="match status" value="1"/>
</dbReference>
<dbReference type="HAMAP" id="MF_00366">
    <property type="entry name" value="RNApol_bact_RpoZ"/>
    <property type="match status" value="1"/>
</dbReference>
<dbReference type="InterPro" id="IPR003716">
    <property type="entry name" value="DNA-dir_RNA_pol_omega"/>
</dbReference>
<dbReference type="InterPro" id="IPR006110">
    <property type="entry name" value="Pol_omega/Rpo6/RPB6"/>
</dbReference>
<dbReference type="InterPro" id="IPR036161">
    <property type="entry name" value="RPB6/omega-like_sf"/>
</dbReference>
<dbReference type="NCBIfam" id="TIGR00690">
    <property type="entry name" value="rpoZ"/>
    <property type="match status" value="1"/>
</dbReference>
<dbReference type="PANTHER" id="PTHR34476">
    <property type="entry name" value="DNA-DIRECTED RNA POLYMERASE SUBUNIT OMEGA"/>
    <property type="match status" value="1"/>
</dbReference>
<dbReference type="PANTHER" id="PTHR34476:SF1">
    <property type="entry name" value="DNA-DIRECTED RNA POLYMERASE SUBUNIT OMEGA"/>
    <property type="match status" value="1"/>
</dbReference>
<dbReference type="Pfam" id="PF01192">
    <property type="entry name" value="RNA_pol_Rpb6"/>
    <property type="match status" value="1"/>
</dbReference>
<dbReference type="SMART" id="SM01409">
    <property type="entry name" value="RNA_pol_Rpb6"/>
    <property type="match status" value="1"/>
</dbReference>
<dbReference type="SUPFAM" id="SSF63562">
    <property type="entry name" value="RPB6/omega subunit-like"/>
    <property type="match status" value="1"/>
</dbReference>
<accession>B0REV6</accession>
<proteinExistence type="inferred from homology"/>
<protein>
    <recommendedName>
        <fullName evidence="1">DNA-directed RNA polymerase subunit omega</fullName>
        <shortName evidence="1">RNAP omega subunit</shortName>
        <ecNumber evidence="1">2.7.7.6</ecNumber>
    </recommendedName>
    <alternativeName>
        <fullName evidence="1">RNA polymerase omega subunit</fullName>
    </alternativeName>
    <alternativeName>
        <fullName evidence="1">Transcriptase subunit omega</fullName>
    </alternativeName>
</protein>
<name>RPOZ_CLASE</name>
<comment type="function">
    <text evidence="1">Promotes RNA polymerase assembly. Latches the N- and C-terminal regions of the beta' subunit thereby facilitating its interaction with the beta and alpha subunits.</text>
</comment>
<comment type="catalytic activity">
    <reaction evidence="1">
        <text>RNA(n) + a ribonucleoside 5'-triphosphate = RNA(n+1) + diphosphate</text>
        <dbReference type="Rhea" id="RHEA:21248"/>
        <dbReference type="Rhea" id="RHEA-COMP:14527"/>
        <dbReference type="Rhea" id="RHEA-COMP:17342"/>
        <dbReference type="ChEBI" id="CHEBI:33019"/>
        <dbReference type="ChEBI" id="CHEBI:61557"/>
        <dbReference type="ChEBI" id="CHEBI:140395"/>
        <dbReference type="EC" id="2.7.7.6"/>
    </reaction>
</comment>
<comment type="subunit">
    <text evidence="1">The RNAP catalytic core consists of 2 alpha, 1 beta, 1 beta' and 1 omega subunit. When a sigma factor is associated with the core the holoenzyme is formed, which can initiate transcription.</text>
</comment>
<comment type="similarity">
    <text evidence="1">Belongs to the RNA polymerase subunit omega family.</text>
</comment>
<sequence>MVDKTQGIIDPPIDELLSKVDSKYALVIFASKRARQINDYYADLHEGSLFDNVGPLVDSTIDDKPLSVAMHEINEDKLVATPIVEPAAS</sequence>
<gene>
    <name evidence="1" type="primary">rpoZ</name>
    <name type="ordered locus">CMS2026</name>
</gene>
<organism>
    <name type="scientific">Clavibacter sepedonicus</name>
    <name type="common">Clavibacter michiganensis subsp. sepedonicus</name>
    <dbReference type="NCBI Taxonomy" id="31964"/>
    <lineage>
        <taxon>Bacteria</taxon>
        <taxon>Bacillati</taxon>
        <taxon>Actinomycetota</taxon>
        <taxon>Actinomycetes</taxon>
        <taxon>Micrococcales</taxon>
        <taxon>Microbacteriaceae</taxon>
        <taxon>Clavibacter</taxon>
    </lineage>
</organism>
<keyword id="KW-0240">DNA-directed RNA polymerase</keyword>
<keyword id="KW-0548">Nucleotidyltransferase</keyword>
<keyword id="KW-0804">Transcription</keyword>
<keyword id="KW-0808">Transferase</keyword>
<reference key="1">
    <citation type="journal article" date="2008" name="J. Bacteriol.">
        <title>Genome of the actinomycete plant pathogen Clavibacter michiganensis subsp. sepedonicus suggests recent niche adaptation.</title>
        <authorList>
            <person name="Bentley S.D."/>
            <person name="Corton C."/>
            <person name="Brown S.E."/>
            <person name="Barron A."/>
            <person name="Clark L."/>
            <person name="Doggett J."/>
            <person name="Harris B."/>
            <person name="Ormond D."/>
            <person name="Quail M.A."/>
            <person name="May G."/>
            <person name="Francis D."/>
            <person name="Knudson D."/>
            <person name="Parkhill J."/>
            <person name="Ishimaru C.A."/>
        </authorList>
    </citation>
    <scope>NUCLEOTIDE SEQUENCE [LARGE SCALE GENOMIC DNA]</scope>
    <source>
        <strain>ATCC 33113 / DSM 20744 / JCM 9667 / LMG 2889 / ICMP 2535 / C-1</strain>
    </source>
</reference>
<feature type="chain" id="PRO_1000079621" description="DNA-directed RNA polymerase subunit omega">
    <location>
        <begin position="1"/>
        <end position="89"/>
    </location>
</feature>
<evidence type="ECO:0000255" key="1">
    <source>
        <dbReference type="HAMAP-Rule" id="MF_00366"/>
    </source>
</evidence>